<feature type="chain" id="PRO_0000168292" description="Dihydroneopterin aldolase">
    <location>
        <begin position="1"/>
        <end position="119"/>
    </location>
</feature>
<feature type="active site" description="Proton donor/acceptor" evidence="1">
    <location>
        <position position="99"/>
    </location>
</feature>
<feature type="binding site" evidence="1">
    <location>
        <position position="21"/>
    </location>
    <ligand>
        <name>substrate</name>
    </ligand>
</feature>
<feature type="binding site" evidence="1">
    <location>
        <position position="53"/>
    </location>
    <ligand>
        <name>substrate</name>
    </ligand>
</feature>
<feature type="binding site" evidence="1">
    <location>
        <begin position="72"/>
        <end position="73"/>
    </location>
    <ligand>
        <name>substrate</name>
    </ligand>
</feature>
<proteinExistence type="inferred from homology"/>
<sequence length="119" mass="13441">MDKIVLEGCRFYGYHGAFKEEQTLGQIFLVDLELSVDLQAASLSDQLTDTVHYGMVFDSVRQLVEGEKFILIERLAGAICEQLFNEFPPIEAIKVAIKKENPPIAGHYKAVGIELERQR</sequence>
<dbReference type="EC" id="4.1.2.25"/>
<dbReference type="EMBL" id="AE009949">
    <property type="protein sequence ID" value="AAL97685.1"/>
    <property type="molecule type" value="Genomic_DNA"/>
</dbReference>
<dbReference type="RefSeq" id="WP_002989868.1">
    <property type="nucleotide sequence ID" value="NC_003485.1"/>
</dbReference>
<dbReference type="SMR" id="P0A3E2"/>
<dbReference type="KEGG" id="spm:spyM18_1061"/>
<dbReference type="HOGENOM" id="CLU_112632_1_3_9"/>
<dbReference type="UniPathway" id="UPA00077">
    <property type="reaction ID" value="UER00154"/>
</dbReference>
<dbReference type="GO" id="GO:0005737">
    <property type="term" value="C:cytoplasm"/>
    <property type="evidence" value="ECO:0007669"/>
    <property type="project" value="TreeGrafter"/>
</dbReference>
<dbReference type="GO" id="GO:0004150">
    <property type="term" value="F:dihydroneopterin aldolase activity"/>
    <property type="evidence" value="ECO:0007669"/>
    <property type="project" value="UniProtKB-EC"/>
</dbReference>
<dbReference type="GO" id="GO:0046656">
    <property type="term" value="P:folic acid biosynthetic process"/>
    <property type="evidence" value="ECO:0007669"/>
    <property type="project" value="UniProtKB-KW"/>
</dbReference>
<dbReference type="GO" id="GO:0046654">
    <property type="term" value="P:tetrahydrofolate biosynthetic process"/>
    <property type="evidence" value="ECO:0007669"/>
    <property type="project" value="UniProtKB-UniPathway"/>
</dbReference>
<dbReference type="CDD" id="cd00534">
    <property type="entry name" value="DHNA_DHNTPE"/>
    <property type="match status" value="1"/>
</dbReference>
<dbReference type="FunFam" id="3.30.1130.10:FF:000003">
    <property type="entry name" value="7,8-dihydroneopterin aldolase"/>
    <property type="match status" value="1"/>
</dbReference>
<dbReference type="Gene3D" id="3.30.1130.10">
    <property type="match status" value="1"/>
</dbReference>
<dbReference type="InterPro" id="IPR006156">
    <property type="entry name" value="Dihydroneopterin_aldolase"/>
</dbReference>
<dbReference type="InterPro" id="IPR006157">
    <property type="entry name" value="FolB_dom"/>
</dbReference>
<dbReference type="InterPro" id="IPR043133">
    <property type="entry name" value="GTP-CH-I_C/QueF"/>
</dbReference>
<dbReference type="NCBIfam" id="TIGR00525">
    <property type="entry name" value="folB"/>
    <property type="match status" value="1"/>
</dbReference>
<dbReference type="NCBIfam" id="TIGR00526">
    <property type="entry name" value="folB_dom"/>
    <property type="match status" value="1"/>
</dbReference>
<dbReference type="PANTHER" id="PTHR42844">
    <property type="entry name" value="DIHYDRONEOPTERIN ALDOLASE 1-RELATED"/>
    <property type="match status" value="1"/>
</dbReference>
<dbReference type="PANTHER" id="PTHR42844:SF1">
    <property type="entry name" value="DIHYDRONEOPTERIN ALDOLASE 1-RELATED"/>
    <property type="match status" value="1"/>
</dbReference>
<dbReference type="Pfam" id="PF02152">
    <property type="entry name" value="FolB"/>
    <property type="match status" value="1"/>
</dbReference>
<dbReference type="SMART" id="SM00905">
    <property type="entry name" value="FolB"/>
    <property type="match status" value="1"/>
</dbReference>
<dbReference type="SUPFAM" id="SSF55620">
    <property type="entry name" value="Tetrahydrobiopterin biosynthesis enzymes-like"/>
    <property type="match status" value="1"/>
</dbReference>
<protein>
    <recommendedName>
        <fullName>Dihydroneopterin aldolase</fullName>
        <shortName>DHNA</shortName>
        <ecNumber>4.1.2.25</ecNumber>
    </recommendedName>
    <alternativeName>
        <fullName>7,8-dihydroneopterin aldolase</fullName>
    </alternativeName>
</protein>
<organism>
    <name type="scientific">Streptococcus pyogenes serotype M18 (strain MGAS8232)</name>
    <dbReference type="NCBI Taxonomy" id="186103"/>
    <lineage>
        <taxon>Bacteria</taxon>
        <taxon>Bacillati</taxon>
        <taxon>Bacillota</taxon>
        <taxon>Bacilli</taxon>
        <taxon>Lactobacillales</taxon>
        <taxon>Streptococcaceae</taxon>
        <taxon>Streptococcus</taxon>
    </lineage>
</organism>
<accession>P0A3E2</accession>
<accession>O33725</accession>
<comment type="function">
    <text evidence="1">Catalyzes the conversion of 7,8-dihydroneopterin to 6-hydroxymethyl-7,8-dihydropterin.</text>
</comment>
<comment type="catalytic activity">
    <reaction evidence="1">
        <text>7,8-dihydroneopterin = 6-hydroxymethyl-7,8-dihydropterin + glycolaldehyde</text>
        <dbReference type="Rhea" id="RHEA:10540"/>
        <dbReference type="ChEBI" id="CHEBI:17001"/>
        <dbReference type="ChEBI" id="CHEBI:17071"/>
        <dbReference type="ChEBI" id="CHEBI:44841"/>
        <dbReference type="EC" id="4.1.2.25"/>
    </reaction>
</comment>
<comment type="pathway">
    <text>Cofactor biosynthesis; tetrahydrofolate biosynthesis; 2-amino-4-hydroxy-6-hydroxymethyl-7,8-dihydropteridine diphosphate from 7,8-dihydroneopterin triphosphate: step 3/4.</text>
</comment>
<comment type="similarity">
    <text evidence="2">Belongs to the DHNA family.</text>
</comment>
<reference key="1">
    <citation type="journal article" date="2002" name="Proc. Natl. Acad. Sci. U.S.A.">
        <title>Genome sequence and comparative microarray analysis of serotype M18 group A Streptococcus strains associated with acute rheumatic fever outbreaks.</title>
        <authorList>
            <person name="Smoot J.C."/>
            <person name="Barbian K.D."/>
            <person name="Van Gompel J.J."/>
            <person name="Smoot L.M."/>
            <person name="Chaussee M.S."/>
            <person name="Sylva G.L."/>
            <person name="Sturdevant D.E."/>
            <person name="Ricklefs S.M."/>
            <person name="Porcella S.F."/>
            <person name="Parkins L.D."/>
            <person name="Beres S.B."/>
            <person name="Campbell D.S."/>
            <person name="Smith T.M."/>
            <person name="Zhang Q."/>
            <person name="Kapur V."/>
            <person name="Daly J.A."/>
            <person name="Veasy L.G."/>
            <person name="Musser J.M."/>
        </authorList>
    </citation>
    <scope>NUCLEOTIDE SEQUENCE [LARGE SCALE GENOMIC DNA]</scope>
    <source>
        <strain>MGAS8232</strain>
    </source>
</reference>
<keyword id="KW-0289">Folate biosynthesis</keyword>
<keyword id="KW-0456">Lyase</keyword>
<evidence type="ECO:0000250" key="1">
    <source>
        <dbReference type="UniProtKB" id="P0AC16"/>
    </source>
</evidence>
<evidence type="ECO:0000305" key="2"/>
<name>FOLB_STRP8</name>
<gene>
    <name type="primary">folB</name>
    <name type="synonym">folQ</name>
    <name type="ordered locus">spyM18_1061</name>
</gene>